<dbReference type="EC" id="1.1.1.37" evidence="1"/>
<dbReference type="EMBL" id="AP009240">
    <property type="protein sequence ID" value="BAG79039.1"/>
    <property type="molecule type" value="Genomic_DNA"/>
</dbReference>
<dbReference type="RefSeq" id="WP_012565174.1">
    <property type="nucleotide sequence ID" value="NC_011415.1"/>
</dbReference>
<dbReference type="SMR" id="B6I1V4"/>
<dbReference type="KEGG" id="ecy:ECSE_3515"/>
<dbReference type="HOGENOM" id="CLU_047181_0_1_6"/>
<dbReference type="Proteomes" id="UP000008199">
    <property type="component" value="Chromosome"/>
</dbReference>
<dbReference type="GO" id="GO:0005737">
    <property type="term" value="C:cytoplasm"/>
    <property type="evidence" value="ECO:0007669"/>
    <property type="project" value="TreeGrafter"/>
</dbReference>
<dbReference type="GO" id="GO:0030060">
    <property type="term" value="F:L-malate dehydrogenase (NAD+) activity"/>
    <property type="evidence" value="ECO:0007669"/>
    <property type="project" value="UniProtKB-UniRule"/>
</dbReference>
<dbReference type="GO" id="GO:0006108">
    <property type="term" value="P:malate metabolic process"/>
    <property type="evidence" value="ECO:0007669"/>
    <property type="project" value="InterPro"/>
</dbReference>
<dbReference type="GO" id="GO:0006099">
    <property type="term" value="P:tricarboxylic acid cycle"/>
    <property type="evidence" value="ECO:0007669"/>
    <property type="project" value="UniProtKB-UniRule"/>
</dbReference>
<dbReference type="CDD" id="cd01337">
    <property type="entry name" value="MDH_glyoxysomal_mitochondrial"/>
    <property type="match status" value="1"/>
</dbReference>
<dbReference type="FunFam" id="3.40.50.720:FF:000017">
    <property type="entry name" value="Malate dehydrogenase"/>
    <property type="match status" value="1"/>
</dbReference>
<dbReference type="FunFam" id="3.90.110.10:FF:000001">
    <property type="entry name" value="Malate dehydrogenase"/>
    <property type="match status" value="1"/>
</dbReference>
<dbReference type="Gene3D" id="3.90.110.10">
    <property type="entry name" value="Lactate dehydrogenase/glycoside hydrolase, family 4, C-terminal"/>
    <property type="match status" value="1"/>
</dbReference>
<dbReference type="Gene3D" id="3.40.50.720">
    <property type="entry name" value="NAD(P)-binding Rossmann-like Domain"/>
    <property type="match status" value="1"/>
</dbReference>
<dbReference type="HAMAP" id="MF_01516">
    <property type="entry name" value="Malate_dehydrog_1"/>
    <property type="match status" value="1"/>
</dbReference>
<dbReference type="InterPro" id="IPR001557">
    <property type="entry name" value="L-lactate/malate_DH"/>
</dbReference>
<dbReference type="InterPro" id="IPR022383">
    <property type="entry name" value="Lactate/malate_DH_C"/>
</dbReference>
<dbReference type="InterPro" id="IPR001236">
    <property type="entry name" value="Lactate/malate_DH_N"/>
</dbReference>
<dbReference type="InterPro" id="IPR015955">
    <property type="entry name" value="Lactate_DH/Glyco_Ohase_4_C"/>
</dbReference>
<dbReference type="InterPro" id="IPR001252">
    <property type="entry name" value="Malate_DH_AS"/>
</dbReference>
<dbReference type="InterPro" id="IPR010097">
    <property type="entry name" value="Malate_DH_type1"/>
</dbReference>
<dbReference type="InterPro" id="IPR023958">
    <property type="entry name" value="Malate_DH_type1_bac"/>
</dbReference>
<dbReference type="InterPro" id="IPR036291">
    <property type="entry name" value="NAD(P)-bd_dom_sf"/>
</dbReference>
<dbReference type="NCBIfam" id="TIGR01772">
    <property type="entry name" value="MDH_euk_gproteo"/>
    <property type="match status" value="1"/>
</dbReference>
<dbReference type="PANTHER" id="PTHR11540">
    <property type="entry name" value="MALATE AND LACTATE DEHYDROGENASE"/>
    <property type="match status" value="1"/>
</dbReference>
<dbReference type="PANTHER" id="PTHR11540:SF16">
    <property type="entry name" value="MALATE DEHYDROGENASE, MITOCHONDRIAL"/>
    <property type="match status" value="1"/>
</dbReference>
<dbReference type="Pfam" id="PF02866">
    <property type="entry name" value="Ldh_1_C"/>
    <property type="match status" value="1"/>
</dbReference>
<dbReference type="Pfam" id="PF00056">
    <property type="entry name" value="Ldh_1_N"/>
    <property type="match status" value="1"/>
</dbReference>
<dbReference type="PIRSF" id="PIRSF000102">
    <property type="entry name" value="Lac_mal_DH"/>
    <property type="match status" value="1"/>
</dbReference>
<dbReference type="SUPFAM" id="SSF56327">
    <property type="entry name" value="LDH C-terminal domain-like"/>
    <property type="match status" value="1"/>
</dbReference>
<dbReference type="SUPFAM" id="SSF51735">
    <property type="entry name" value="NAD(P)-binding Rossmann-fold domains"/>
    <property type="match status" value="1"/>
</dbReference>
<dbReference type="PROSITE" id="PS00068">
    <property type="entry name" value="MDH"/>
    <property type="match status" value="1"/>
</dbReference>
<gene>
    <name evidence="1" type="primary">mdh</name>
    <name type="ordered locus">ECSE_3515</name>
</gene>
<feature type="chain" id="PRO_1000146175" description="Malate dehydrogenase">
    <location>
        <begin position="1"/>
        <end position="312"/>
    </location>
</feature>
<feature type="active site" description="Proton acceptor" evidence="1">
    <location>
        <position position="177"/>
    </location>
</feature>
<feature type="binding site" evidence="1">
    <location>
        <begin position="7"/>
        <end position="13"/>
    </location>
    <ligand>
        <name>NAD(+)</name>
        <dbReference type="ChEBI" id="CHEBI:57540"/>
    </ligand>
</feature>
<feature type="binding site" evidence="1">
    <location>
        <position position="34"/>
    </location>
    <ligand>
        <name>NAD(+)</name>
        <dbReference type="ChEBI" id="CHEBI:57540"/>
    </ligand>
</feature>
<feature type="binding site" evidence="1">
    <location>
        <position position="81"/>
    </location>
    <ligand>
        <name>substrate</name>
    </ligand>
</feature>
<feature type="binding site" evidence="1">
    <location>
        <position position="87"/>
    </location>
    <ligand>
        <name>substrate</name>
    </ligand>
</feature>
<feature type="binding site" evidence="1">
    <location>
        <position position="94"/>
    </location>
    <ligand>
        <name>NAD(+)</name>
        <dbReference type="ChEBI" id="CHEBI:57540"/>
    </ligand>
</feature>
<feature type="binding site" evidence="1">
    <location>
        <begin position="117"/>
        <end position="119"/>
    </location>
    <ligand>
        <name>NAD(+)</name>
        <dbReference type="ChEBI" id="CHEBI:57540"/>
    </ligand>
</feature>
<feature type="binding site" evidence="1">
    <location>
        <position position="119"/>
    </location>
    <ligand>
        <name>substrate</name>
    </ligand>
</feature>
<feature type="binding site" evidence="1">
    <location>
        <position position="153"/>
    </location>
    <ligand>
        <name>substrate</name>
    </ligand>
</feature>
<feature type="binding site" evidence="1">
    <location>
        <position position="227"/>
    </location>
    <ligand>
        <name>NAD(+)</name>
        <dbReference type="ChEBI" id="CHEBI:57540"/>
    </ligand>
</feature>
<organism>
    <name type="scientific">Escherichia coli (strain SE11)</name>
    <dbReference type="NCBI Taxonomy" id="409438"/>
    <lineage>
        <taxon>Bacteria</taxon>
        <taxon>Pseudomonadati</taxon>
        <taxon>Pseudomonadota</taxon>
        <taxon>Gammaproteobacteria</taxon>
        <taxon>Enterobacterales</taxon>
        <taxon>Enterobacteriaceae</taxon>
        <taxon>Escherichia</taxon>
    </lineage>
</organism>
<proteinExistence type="inferred from homology"/>
<sequence>MKVAVLGAAGGIGQALALLLKTQLPSGSELSLYDIAPVTPGVAVDLSHIPTAVKIKGFSGEDATPALEGADVVLISAGVARKPGMDRSDLFNVNAGIVKNLVQQVSKTCPKACIGIITNPVNTTVAIAAEVLKKAGVYDKNKLFGVTTLDIIRSNTFVAELKGKQPGEVEVPVIGGHSGVTILPLLSQVPGVSFTEQEVADLTKRIQNAGTEVVEAKAGGGSATLSMGQAAARFGLSLVRALQGEQGVVECAYVEGDGQYARFFSQPLLLGKNGVEERKSIGTLSAFEQNALEGMLDTLKKDIALGEEFVNK</sequence>
<name>MDH_ECOSE</name>
<comment type="function">
    <text evidence="1">Catalyzes the reversible oxidation of malate to oxaloacetate.</text>
</comment>
<comment type="catalytic activity">
    <reaction evidence="1">
        <text>(S)-malate + NAD(+) = oxaloacetate + NADH + H(+)</text>
        <dbReference type="Rhea" id="RHEA:21432"/>
        <dbReference type="ChEBI" id="CHEBI:15378"/>
        <dbReference type="ChEBI" id="CHEBI:15589"/>
        <dbReference type="ChEBI" id="CHEBI:16452"/>
        <dbReference type="ChEBI" id="CHEBI:57540"/>
        <dbReference type="ChEBI" id="CHEBI:57945"/>
        <dbReference type="EC" id="1.1.1.37"/>
    </reaction>
</comment>
<comment type="subunit">
    <text evidence="1">Homodimer.</text>
</comment>
<comment type="similarity">
    <text evidence="1">Belongs to the LDH/MDH superfamily. MDH type 1 family.</text>
</comment>
<reference key="1">
    <citation type="journal article" date="2008" name="DNA Res.">
        <title>Complete genome sequence and comparative analysis of the wild-type commensal Escherichia coli strain SE11 isolated from a healthy adult.</title>
        <authorList>
            <person name="Oshima K."/>
            <person name="Toh H."/>
            <person name="Ogura Y."/>
            <person name="Sasamoto H."/>
            <person name="Morita H."/>
            <person name="Park S.-H."/>
            <person name="Ooka T."/>
            <person name="Iyoda S."/>
            <person name="Taylor T.D."/>
            <person name="Hayashi T."/>
            <person name="Itoh K."/>
            <person name="Hattori M."/>
        </authorList>
    </citation>
    <scope>NUCLEOTIDE SEQUENCE [LARGE SCALE GENOMIC DNA]</scope>
    <source>
        <strain>SE11</strain>
    </source>
</reference>
<protein>
    <recommendedName>
        <fullName evidence="1">Malate dehydrogenase</fullName>
        <ecNumber evidence="1">1.1.1.37</ecNumber>
    </recommendedName>
</protein>
<accession>B6I1V4</accession>
<keyword id="KW-0520">NAD</keyword>
<keyword id="KW-0560">Oxidoreductase</keyword>
<keyword id="KW-0816">Tricarboxylic acid cycle</keyword>
<evidence type="ECO:0000255" key="1">
    <source>
        <dbReference type="HAMAP-Rule" id="MF_01516"/>
    </source>
</evidence>